<name>ATPG_ACIBC</name>
<dbReference type="EMBL" id="CP000863">
    <property type="protein sequence ID" value="ACC55489.1"/>
    <property type="molecule type" value="Genomic_DNA"/>
</dbReference>
<dbReference type="RefSeq" id="WP_001284971.1">
    <property type="nucleotide sequence ID" value="NZ_CP031380.1"/>
</dbReference>
<dbReference type="SMR" id="B2I101"/>
<dbReference type="GeneID" id="92892166"/>
<dbReference type="KEGG" id="abc:ACICU_00177"/>
<dbReference type="HOGENOM" id="CLU_050669_0_1_6"/>
<dbReference type="Proteomes" id="UP000008839">
    <property type="component" value="Chromosome"/>
</dbReference>
<dbReference type="GO" id="GO:0005886">
    <property type="term" value="C:plasma membrane"/>
    <property type="evidence" value="ECO:0007669"/>
    <property type="project" value="UniProtKB-SubCell"/>
</dbReference>
<dbReference type="GO" id="GO:0045259">
    <property type="term" value="C:proton-transporting ATP synthase complex"/>
    <property type="evidence" value="ECO:0007669"/>
    <property type="project" value="UniProtKB-KW"/>
</dbReference>
<dbReference type="GO" id="GO:0005524">
    <property type="term" value="F:ATP binding"/>
    <property type="evidence" value="ECO:0007669"/>
    <property type="project" value="UniProtKB-UniRule"/>
</dbReference>
<dbReference type="GO" id="GO:0046933">
    <property type="term" value="F:proton-transporting ATP synthase activity, rotational mechanism"/>
    <property type="evidence" value="ECO:0007669"/>
    <property type="project" value="UniProtKB-UniRule"/>
</dbReference>
<dbReference type="GO" id="GO:0042777">
    <property type="term" value="P:proton motive force-driven plasma membrane ATP synthesis"/>
    <property type="evidence" value="ECO:0007669"/>
    <property type="project" value="UniProtKB-UniRule"/>
</dbReference>
<dbReference type="CDD" id="cd12151">
    <property type="entry name" value="F1-ATPase_gamma"/>
    <property type="match status" value="1"/>
</dbReference>
<dbReference type="FunFam" id="1.10.287.80:FF:000005">
    <property type="entry name" value="ATP synthase gamma chain"/>
    <property type="match status" value="1"/>
</dbReference>
<dbReference type="Gene3D" id="3.40.1380.10">
    <property type="match status" value="1"/>
</dbReference>
<dbReference type="Gene3D" id="1.10.287.80">
    <property type="entry name" value="ATP synthase, gamma subunit, helix hairpin domain"/>
    <property type="match status" value="1"/>
</dbReference>
<dbReference type="HAMAP" id="MF_00815">
    <property type="entry name" value="ATP_synth_gamma_bact"/>
    <property type="match status" value="1"/>
</dbReference>
<dbReference type="InterPro" id="IPR035968">
    <property type="entry name" value="ATP_synth_F1_ATPase_gsu"/>
</dbReference>
<dbReference type="InterPro" id="IPR000131">
    <property type="entry name" value="ATP_synth_F1_gsu"/>
</dbReference>
<dbReference type="InterPro" id="IPR023632">
    <property type="entry name" value="ATP_synth_F1_gsu_CS"/>
</dbReference>
<dbReference type="NCBIfam" id="TIGR01146">
    <property type="entry name" value="ATPsyn_F1gamma"/>
    <property type="match status" value="1"/>
</dbReference>
<dbReference type="NCBIfam" id="NF004144">
    <property type="entry name" value="PRK05621.1-1"/>
    <property type="match status" value="1"/>
</dbReference>
<dbReference type="PANTHER" id="PTHR11693">
    <property type="entry name" value="ATP SYNTHASE GAMMA CHAIN"/>
    <property type="match status" value="1"/>
</dbReference>
<dbReference type="PANTHER" id="PTHR11693:SF22">
    <property type="entry name" value="ATP SYNTHASE SUBUNIT GAMMA, MITOCHONDRIAL"/>
    <property type="match status" value="1"/>
</dbReference>
<dbReference type="Pfam" id="PF00231">
    <property type="entry name" value="ATP-synt"/>
    <property type="match status" value="1"/>
</dbReference>
<dbReference type="PRINTS" id="PR00126">
    <property type="entry name" value="ATPASEGAMMA"/>
</dbReference>
<dbReference type="SUPFAM" id="SSF52943">
    <property type="entry name" value="ATP synthase (F1-ATPase), gamma subunit"/>
    <property type="match status" value="1"/>
</dbReference>
<dbReference type="PROSITE" id="PS00153">
    <property type="entry name" value="ATPASE_GAMMA"/>
    <property type="match status" value="1"/>
</dbReference>
<reference key="1">
    <citation type="journal article" date="2008" name="Antimicrob. Agents Chemother.">
        <title>Whole-genome pyrosequencing of an epidemic multidrug-resistant Acinetobacter baumannii strain belonging to the European clone II group.</title>
        <authorList>
            <person name="Iacono M."/>
            <person name="Villa L."/>
            <person name="Fortini D."/>
            <person name="Bordoni R."/>
            <person name="Imperi F."/>
            <person name="Bonnal R.J."/>
            <person name="Sicheritz-Ponten T."/>
            <person name="De Bellis G."/>
            <person name="Visca P."/>
            <person name="Cassone A."/>
            <person name="Carattoli A."/>
        </authorList>
    </citation>
    <scope>NUCLEOTIDE SEQUENCE [LARGE SCALE GENOMIC DNA]</scope>
    <source>
        <strain>ACICU</strain>
    </source>
</reference>
<sequence>MANLKEIRAKVASIKSTQKITRAMQMVAASKMRRAQERMAQGRPYADNMRRVIAHLVQANPEYKHRYMVDRPVKRVGYIIVSSDRGLAGGLNINLFKKVVQHVKAQQEQSIEVQFALIGQKAVSFFKNYGGKVLGATTQIGDAPSLEQLTGSVQVMLDAFDKGELDRIYLVSNGFVNAMTQKPKVEQLVPLAPAEEGDDLNRTYGWDYIYEPEAEELLNGLLVRYIESMVYQGVIENVACEQSARMVAMKAATDNAGQLIKDLQLIYNKLRQAAITQEISEIVGGAAAV</sequence>
<accession>B2I101</accession>
<gene>
    <name evidence="1" type="primary">atpG</name>
    <name type="ordered locus">ACICU_00177</name>
</gene>
<evidence type="ECO:0000255" key="1">
    <source>
        <dbReference type="HAMAP-Rule" id="MF_00815"/>
    </source>
</evidence>
<feature type="chain" id="PRO_1000134094" description="ATP synthase gamma chain">
    <location>
        <begin position="1"/>
        <end position="289"/>
    </location>
</feature>
<protein>
    <recommendedName>
        <fullName evidence="1">ATP synthase gamma chain</fullName>
    </recommendedName>
    <alternativeName>
        <fullName evidence="1">ATP synthase F1 sector gamma subunit</fullName>
    </alternativeName>
    <alternativeName>
        <fullName evidence="1">F-ATPase gamma subunit</fullName>
    </alternativeName>
</protein>
<comment type="function">
    <text evidence="1">Produces ATP from ADP in the presence of a proton gradient across the membrane. The gamma chain is believed to be important in regulating ATPase activity and the flow of protons through the CF(0) complex.</text>
</comment>
<comment type="subunit">
    <text evidence="1">F-type ATPases have 2 components, CF(1) - the catalytic core - and CF(0) - the membrane proton channel. CF(1) has five subunits: alpha(3), beta(3), gamma(1), delta(1), epsilon(1). CF(0) has three main subunits: a, b and c.</text>
</comment>
<comment type="subcellular location">
    <subcellularLocation>
        <location evidence="1">Cell inner membrane</location>
        <topology evidence="1">Peripheral membrane protein</topology>
    </subcellularLocation>
</comment>
<comment type="similarity">
    <text evidence="1">Belongs to the ATPase gamma chain family.</text>
</comment>
<proteinExistence type="inferred from homology"/>
<keyword id="KW-0066">ATP synthesis</keyword>
<keyword id="KW-0997">Cell inner membrane</keyword>
<keyword id="KW-1003">Cell membrane</keyword>
<keyword id="KW-0139">CF(1)</keyword>
<keyword id="KW-0375">Hydrogen ion transport</keyword>
<keyword id="KW-0406">Ion transport</keyword>
<keyword id="KW-0472">Membrane</keyword>
<keyword id="KW-0813">Transport</keyword>
<organism>
    <name type="scientific">Acinetobacter baumannii (strain ACICU)</name>
    <dbReference type="NCBI Taxonomy" id="405416"/>
    <lineage>
        <taxon>Bacteria</taxon>
        <taxon>Pseudomonadati</taxon>
        <taxon>Pseudomonadota</taxon>
        <taxon>Gammaproteobacteria</taxon>
        <taxon>Moraxellales</taxon>
        <taxon>Moraxellaceae</taxon>
        <taxon>Acinetobacter</taxon>
        <taxon>Acinetobacter calcoaceticus/baumannii complex</taxon>
    </lineage>
</organism>